<evidence type="ECO:0000250" key="1"/>
<evidence type="ECO:0000255" key="2">
    <source>
        <dbReference type="HAMAP-Rule" id="MF_03122"/>
    </source>
</evidence>
<evidence type="ECO:0000256" key="3">
    <source>
        <dbReference type="SAM" id="MobiDB-lite"/>
    </source>
</evidence>
<evidence type="ECO:0000305" key="4"/>
<feature type="initiator methionine" description="Removed" evidence="2">
    <location>
        <position position="1"/>
    </location>
</feature>
<feature type="chain" id="PRO_0000153528" description="Small ribosomal subunit protein eS1">
    <location>
        <begin position="2"/>
        <end position="269"/>
    </location>
</feature>
<feature type="region of interest" description="Disordered" evidence="3">
    <location>
        <begin position="1"/>
        <end position="20"/>
    </location>
</feature>
<feature type="sequence conflict" description="In Ref. 1; CAA66861." evidence="4" ref="1">
    <original>V</original>
    <variation>S</variation>
    <location>
        <position position="44"/>
    </location>
</feature>
<feature type="sequence conflict" description="In Ref. 1; CAA66861." evidence="4" ref="1">
    <original>K</original>
    <variation>N</variation>
    <location>
        <position position="118"/>
    </location>
</feature>
<feature type="sequence conflict" description="In Ref. 1; CAA66861." evidence="4" ref="1">
    <original>D</original>
    <variation>V</variation>
    <location>
        <position position="256"/>
    </location>
</feature>
<sequence length="269" mass="29812">MAVGKNKGVSKGGKKGSKKKVVDPFTRKDWYDVKAPNMFKNRQVGKTLVNRTQGTKIASDGLKGRVFEVSLADLQNEPDAERSFRKFKLVAESVNGRDVLTNFHGMALTTDKLRSMVKKWQTLIECSVDVKTTDGFMLRVFCIGFTIKDSMSQRKTCYAQHSQIKNIRAKMTAIIKREITSTDLKGVVEKLLPDSIAKDIEKACQVVYPLHDVYIRKVKVLKKPRFDLSSLMELHGDGGGKAAEVSTGAASGVVVDRPEGYEPPVQASV</sequence>
<comment type="function">
    <text evidence="1">Has an essential role in oogenesis.</text>
</comment>
<comment type="subunit">
    <text evidence="2">Component of the small ribosomal subunit. Mature ribosomes consist of a small (40S) and a large (60S) subunit. The 40S subunit contains about 33 different proteins and 1 molecule of RNA (18S). The 60S subunit contains about 49 different proteins and 3 molecules of RNA (28S, 5.8S and 5S).</text>
</comment>
<comment type="subcellular location">
    <subcellularLocation>
        <location evidence="2">Cytoplasm</location>
    </subcellularLocation>
</comment>
<comment type="similarity">
    <text evidence="2">Belongs to the eukaryotic ribosomal protein eS1 family.</text>
</comment>
<reference key="1">
    <citation type="journal article" date="1997" name="Mol. Gen. Genet.">
        <title>Antisense suppression of the putative ribosomal protein S3A gene disrupts ovarian development in Drosophila melanogaster.</title>
        <authorList>
            <person name="Reynaud E."/>
            <person name="Bolshakov V.N."/>
            <person name="Barajas V.N."/>
            <person name="Kafatos F.C."/>
            <person name="Zurita M."/>
        </authorList>
    </citation>
    <scope>NUCLEOTIDE SEQUENCE [MRNA]</scope>
    <source>
        <strain>Suakoko</strain>
        <tissue>Ovary</tissue>
    </source>
</reference>
<reference key="2">
    <citation type="journal article" date="2002" name="Science">
        <title>The genome sequence of the malaria mosquito Anopheles gambiae.</title>
        <authorList>
            <person name="Holt R.A."/>
            <person name="Subramanian G.M."/>
            <person name="Halpern A."/>
            <person name="Sutton G.G."/>
            <person name="Charlab R."/>
            <person name="Nusskern D.R."/>
            <person name="Wincker P."/>
            <person name="Clark A.G."/>
            <person name="Ribeiro J.M.C."/>
            <person name="Wides R."/>
            <person name="Salzberg S.L."/>
            <person name="Loftus B.J."/>
            <person name="Yandell M.D."/>
            <person name="Majoros W.H."/>
            <person name="Rusch D.B."/>
            <person name="Lai Z."/>
            <person name="Kraft C.L."/>
            <person name="Abril J.F."/>
            <person name="Anthouard V."/>
            <person name="Arensburger P."/>
            <person name="Atkinson P.W."/>
            <person name="Baden H."/>
            <person name="de Berardinis V."/>
            <person name="Baldwin D."/>
            <person name="Benes V."/>
            <person name="Biedler J."/>
            <person name="Blass C."/>
            <person name="Bolanos R."/>
            <person name="Boscus D."/>
            <person name="Barnstead M."/>
            <person name="Cai S."/>
            <person name="Center A."/>
            <person name="Chaturverdi K."/>
            <person name="Christophides G.K."/>
            <person name="Chrystal M.A.M."/>
            <person name="Clamp M."/>
            <person name="Cravchik A."/>
            <person name="Curwen V."/>
            <person name="Dana A."/>
            <person name="Delcher A."/>
            <person name="Dew I."/>
            <person name="Evans C.A."/>
            <person name="Flanigan M."/>
            <person name="Grundschober-Freimoser A."/>
            <person name="Friedli L."/>
            <person name="Gu Z."/>
            <person name="Guan P."/>
            <person name="Guigo R."/>
            <person name="Hillenmeyer M.E."/>
            <person name="Hladun S.L."/>
            <person name="Hogan J.R."/>
            <person name="Hong Y.S."/>
            <person name="Hoover J."/>
            <person name="Jaillon O."/>
            <person name="Ke Z."/>
            <person name="Kodira C.D."/>
            <person name="Kokoza E."/>
            <person name="Koutsos A."/>
            <person name="Letunic I."/>
            <person name="Levitsky A.A."/>
            <person name="Liang Y."/>
            <person name="Lin J.-J."/>
            <person name="Lobo N.F."/>
            <person name="Lopez J.R."/>
            <person name="Malek J.A."/>
            <person name="McIntosh T.C."/>
            <person name="Meister S."/>
            <person name="Miller J.R."/>
            <person name="Mobarry C."/>
            <person name="Mongin E."/>
            <person name="Murphy S.D."/>
            <person name="O'Brochta D.A."/>
            <person name="Pfannkoch C."/>
            <person name="Qi R."/>
            <person name="Regier M.A."/>
            <person name="Remington K."/>
            <person name="Shao H."/>
            <person name="Sharakhova M.V."/>
            <person name="Sitter C.D."/>
            <person name="Shetty J."/>
            <person name="Smith T.J."/>
            <person name="Strong R."/>
            <person name="Sun J."/>
            <person name="Thomasova D."/>
            <person name="Ton L.Q."/>
            <person name="Topalis P."/>
            <person name="Tu Z.J."/>
            <person name="Unger M.F."/>
            <person name="Walenz B."/>
            <person name="Wang A.H."/>
            <person name="Wang J."/>
            <person name="Wang M."/>
            <person name="Wang X."/>
            <person name="Woodford K.J."/>
            <person name="Wortman J.R."/>
            <person name="Wu M."/>
            <person name="Yao A."/>
            <person name="Zdobnov E.M."/>
            <person name="Zhang H."/>
            <person name="Zhao Q."/>
            <person name="Zhao S."/>
            <person name="Zhu S.C."/>
            <person name="Zhimulev I."/>
            <person name="Coluzzi M."/>
            <person name="della Torre A."/>
            <person name="Roth C.W."/>
            <person name="Louis C."/>
            <person name="Kalush F."/>
            <person name="Mural R.J."/>
            <person name="Myers E.W."/>
            <person name="Adams M.D."/>
            <person name="Smith H.O."/>
            <person name="Broder S."/>
            <person name="Gardner M.J."/>
            <person name="Fraser C.M."/>
            <person name="Birney E."/>
            <person name="Bork P."/>
            <person name="Brey P.T."/>
            <person name="Venter J.C."/>
            <person name="Weissenbach J."/>
            <person name="Kafatos F.C."/>
            <person name="Collins F.H."/>
            <person name="Hoffman S.L."/>
        </authorList>
    </citation>
    <scope>NUCLEOTIDE SEQUENCE [LARGE SCALE GENOMIC DNA]</scope>
    <source>
        <strain>PEST</strain>
    </source>
</reference>
<dbReference type="EMBL" id="X98186">
    <property type="protein sequence ID" value="CAA66861.1"/>
    <property type="molecule type" value="mRNA"/>
</dbReference>
<dbReference type="EMBL" id="AAAB01008888">
    <property type="protein sequence ID" value="EAA08803.3"/>
    <property type="molecule type" value="Genomic_DNA"/>
</dbReference>
<dbReference type="SMR" id="P52813"/>
<dbReference type="FunCoup" id="P52813">
    <property type="interactions" value="955"/>
</dbReference>
<dbReference type="STRING" id="7165.P52813"/>
<dbReference type="PaxDb" id="7165-AGAP003532-PA"/>
<dbReference type="EnsemblMetazoa" id="AGAP003532-RA">
    <property type="protein sequence ID" value="AGAP003532-PA"/>
    <property type="gene ID" value="AGAP003532"/>
</dbReference>
<dbReference type="GeneID" id="1274189"/>
<dbReference type="KEGG" id="aga:1274189"/>
<dbReference type="CTD" id="6189"/>
<dbReference type="VEuPathDB" id="VectorBase:AGAMI1_000351"/>
<dbReference type="VEuPathDB" id="VectorBase:AGAP003532"/>
<dbReference type="eggNOG" id="KOG1628">
    <property type="taxonomic scope" value="Eukaryota"/>
</dbReference>
<dbReference type="HOGENOM" id="CLU_062507_0_1_1"/>
<dbReference type="InParanoid" id="P52813"/>
<dbReference type="OMA" id="TRFKGHE"/>
<dbReference type="OrthoDB" id="9834376at2759"/>
<dbReference type="PhylomeDB" id="P52813"/>
<dbReference type="Proteomes" id="UP000007062">
    <property type="component" value="Chromosome 2R"/>
</dbReference>
<dbReference type="GO" id="GO:0005829">
    <property type="term" value="C:cytosol"/>
    <property type="evidence" value="ECO:0000318"/>
    <property type="project" value="GO_Central"/>
</dbReference>
<dbReference type="GO" id="GO:0022627">
    <property type="term" value="C:cytosolic small ribosomal subunit"/>
    <property type="evidence" value="ECO:0007669"/>
    <property type="project" value="UniProtKB-UniRule"/>
</dbReference>
<dbReference type="GO" id="GO:0003735">
    <property type="term" value="F:structural constituent of ribosome"/>
    <property type="evidence" value="ECO:0007669"/>
    <property type="project" value="UniProtKB-UniRule"/>
</dbReference>
<dbReference type="GO" id="GO:0006412">
    <property type="term" value="P:translation"/>
    <property type="evidence" value="ECO:0007669"/>
    <property type="project" value="UniProtKB-UniRule"/>
</dbReference>
<dbReference type="HAMAP" id="MF_03122">
    <property type="entry name" value="Ribosomal_eS1_euk"/>
    <property type="match status" value="1"/>
</dbReference>
<dbReference type="InterPro" id="IPR001593">
    <property type="entry name" value="Ribosomal_eS1"/>
</dbReference>
<dbReference type="InterPro" id="IPR018281">
    <property type="entry name" value="Ribosomal_eS1_CS"/>
</dbReference>
<dbReference type="InterPro" id="IPR027500">
    <property type="entry name" value="Ribosomal_eS1_euk"/>
</dbReference>
<dbReference type="PANTHER" id="PTHR11830">
    <property type="entry name" value="40S RIBOSOMAL PROTEIN S3A"/>
    <property type="match status" value="1"/>
</dbReference>
<dbReference type="Pfam" id="PF01015">
    <property type="entry name" value="Ribosomal_S3Ae"/>
    <property type="match status" value="1"/>
</dbReference>
<dbReference type="SMART" id="SM01397">
    <property type="entry name" value="Ribosomal_S3Ae"/>
    <property type="match status" value="1"/>
</dbReference>
<dbReference type="PROSITE" id="PS01191">
    <property type="entry name" value="RIBOSOMAL_S3AE"/>
    <property type="match status" value="1"/>
</dbReference>
<proteinExistence type="evidence at transcript level"/>
<organism>
    <name type="scientific">Anopheles gambiae</name>
    <name type="common">African malaria mosquito</name>
    <dbReference type="NCBI Taxonomy" id="7165"/>
    <lineage>
        <taxon>Eukaryota</taxon>
        <taxon>Metazoa</taxon>
        <taxon>Ecdysozoa</taxon>
        <taxon>Arthropoda</taxon>
        <taxon>Hexapoda</taxon>
        <taxon>Insecta</taxon>
        <taxon>Pterygota</taxon>
        <taxon>Neoptera</taxon>
        <taxon>Endopterygota</taxon>
        <taxon>Diptera</taxon>
        <taxon>Nematocera</taxon>
        <taxon>Culicoidea</taxon>
        <taxon>Culicidae</taxon>
        <taxon>Anophelinae</taxon>
        <taxon>Anopheles</taxon>
    </lineage>
</organism>
<name>RS3A_ANOGA</name>
<protein>
    <recommendedName>
        <fullName evidence="2">Small ribosomal subunit protein eS1</fullName>
    </recommendedName>
    <alternativeName>
        <fullName evidence="4">40S ribosomal protein S3a</fullName>
    </alternativeName>
    <alternativeName>
        <fullName>C3 protein</fullName>
    </alternativeName>
</protein>
<gene>
    <name evidence="2" type="primary">RpS3A</name>
    <name type="synonym">C3</name>
    <name type="ORF">AGAP003532</name>
</gene>
<accession>P52813</accession>
<accession>Q7QAU6</accession>
<keyword id="KW-0963">Cytoplasm</keyword>
<keyword id="KW-1185">Reference proteome</keyword>
<keyword id="KW-0687">Ribonucleoprotein</keyword>
<keyword id="KW-0689">Ribosomal protein</keyword>